<accession>Q28810</accession>
<evidence type="ECO:0000250" key="1"/>
<evidence type="ECO:0000250" key="2">
    <source>
        <dbReference type="UniProtKB" id="P05787"/>
    </source>
</evidence>
<evidence type="ECO:0000250" key="3">
    <source>
        <dbReference type="UniProtKB" id="P11679"/>
    </source>
</evidence>
<evidence type="ECO:0000250" key="4">
    <source>
        <dbReference type="UniProtKB" id="Q10758"/>
    </source>
</evidence>
<evidence type="ECO:0000255" key="5"/>
<evidence type="ECO:0000255" key="6">
    <source>
        <dbReference type="PROSITE-ProRule" id="PRU01188"/>
    </source>
</evidence>
<evidence type="ECO:0000256" key="7">
    <source>
        <dbReference type="SAM" id="MobiDB-lite"/>
    </source>
</evidence>
<evidence type="ECO:0000305" key="8"/>
<evidence type="ECO:0000312" key="9">
    <source>
        <dbReference type="EMBL" id="CAA50316.1"/>
    </source>
</evidence>
<feature type="chain" id="PRO_0000228675" description="Keratin, type II cytoskeletal 8" evidence="8">
    <location>
        <begin position="1" status="less than"/>
        <end position="310"/>
    </location>
</feature>
<feature type="domain" description="IF rod" evidence="6">
    <location>
        <begin position="92"/>
        <end position="310" status="greater than"/>
    </location>
</feature>
<feature type="region of interest" description="Disordered" evidence="7">
    <location>
        <begin position="1"/>
        <end position="38"/>
    </location>
</feature>
<feature type="region of interest" description="Coil 1A" evidence="5">
    <location>
        <begin position="92"/>
        <end position="127"/>
    </location>
</feature>
<feature type="region of interest" description="Linker 1" evidence="5">
    <location>
        <begin position="128"/>
        <end position="144"/>
    </location>
</feature>
<feature type="region of interest" description="Coil 1B" evidence="5">
    <location>
        <begin position="145"/>
        <end position="236"/>
    </location>
</feature>
<feature type="region of interest" description="Linker 12" evidence="5">
    <location>
        <begin position="237"/>
        <end position="260"/>
    </location>
</feature>
<feature type="region of interest" description="Coil 2" evidence="5">
    <location>
        <begin position="261"/>
        <end position="310"/>
    </location>
</feature>
<feature type="compositionally biased region" description="Low complexity" evidence="7">
    <location>
        <begin position="7"/>
        <end position="38"/>
    </location>
</feature>
<feature type="modified residue" description="Phosphoserine" evidence="2">
    <location>
        <position position="7"/>
    </location>
</feature>
<feature type="modified residue" description="Phosphoserine" evidence="2">
    <location>
        <position position="9"/>
    </location>
</feature>
<feature type="modified residue" description="Phosphoserine" evidence="2">
    <location>
        <position position="15"/>
    </location>
</feature>
<feature type="modified residue" description="Phosphoserine" evidence="2">
    <location>
        <position position="16"/>
    </location>
</feature>
<feature type="modified residue" description="Omega-N-methylarginine" evidence="2">
    <location>
        <position position="17"/>
    </location>
</feature>
<feature type="modified residue" description="Phosphoserine" evidence="2">
    <location>
        <position position="18"/>
    </location>
</feature>
<feature type="modified residue" description="Phosphoserine" evidence="2">
    <location>
        <position position="21"/>
    </location>
</feature>
<feature type="modified residue" description="Phosphoserine" evidence="2">
    <location>
        <position position="25"/>
    </location>
</feature>
<feature type="modified residue" description="Omega-N-methylarginine" evidence="2">
    <location>
        <position position="26"/>
    </location>
</feature>
<feature type="modified residue" description="Phosphoserine" evidence="2">
    <location>
        <position position="28"/>
    </location>
</feature>
<feature type="modified residue" description="Phosphoserine" evidence="4">
    <location>
        <position position="31"/>
    </location>
</feature>
<feature type="modified residue" description="Phosphoserine" evidence="2">
    <location>
        <position position="33"/>
    </location>
</feature>
<feature type="modified residue" description="Omega-N-methylarginine" evidence="2">
    <location>
        <position position="34"/>
    </location>
</feature>
<feature type="modified residue" description="Phosphoserine" evidence="2">
    <location>
        <position position="37"/>
    </location>
</feature>
<feature type="modified residue" description="Asymmetric dimethylarginine; alternate" evidence="2">
    <location>
        <position position="42"/>
    </location>
</feature>
<feature type="modified residue" description="Omega-N-methylarginine; alternate" evidence="2">
    <location>
        <position position="42"/>
    </location>
</feature>
<feature type="modified residue" description="N6-malonyllysine" evidence="1">
    <location>
        <position position="102"/>
    </location>
</feature>
<feature type="modified residue" description="N6-acetyllysine" evidence="2">
    <location>
        <position position="208"/>
    </location>
</feature>
<feature type="modified residue" description="Phosphotyrosine" evidence="2">
    <location>
        <position position="229"/>
    </location>
</feature>
<feature type="modified residue" description="Phosphoserine" evidence="2">
    <location>
        <position position="254"/>
    </location>
</feature>
<feature type="modified residue" description="Phosphoserine" evidence="2">
    <location>
        <position position="275"/>
    </location>
</feature>
<feature type="modified residue" description="N6-acetyllysine; alternate" evidence="2">
    <location>
        <position position="296"/>
    </location>
</feature>
<feature type="cross-link" description="Glycyl lysine isopeptide (Lys-Gly) (interchain with G-Cter in SUMO2)" evidence="2">
    <location>
        <position position="5"/>
    </location>
</feature>
<feature type="cross-link" description="Glycyl lysine isopeptide (Lys-Gly) (interchain with G-Cter in SUMO2)" evidence="2">
    <location>
        <position position="123"/>
    </location>
</feature>
<feature type="cross-link" description="Glycyl lysine isopeptide (Lys-Gly) (interchain with G-Cter in SUMO2)" evidence="2">
    <location>
        <position position="131"/>
    </location>
</feature>
<feature type="cross-link" description="Glycyl lysine isopeptide (Lys-Gly) (interchain with G-Cter in SUMO1); alternate" evidence="2">
    <location>
        <position position="198"/>
    </location>
</feature>
<feature type="cross-link" description="Glycyl lysine isopeptide (Lys-Gly) (interchain with G-Cter in SUMO2); alternate" evidence="2">
    <location>
        <position position="198"/>
    </location>
</feature>
<feature type="cross-link" description="Glycyl lysine isopeptide (Lys-Gly) (interchain with G-Cter in SUMO2)" evidence="2">
    <location>
        <position position="286"/>
    </location>
</feature>
<feature type="cross-link" description="Glycyl lysine isopeptide (Lys-Gly) (interchain with G-Cter in SUMO2); alternate" evidence="2">
    <location>
        <position position="296"/>
    </location>
</feature>
<feature type="cross-link" description="Glycyl lysine isopeptide (Lys-Gly) (interchain with G-Cter in SUMO2)" evidence="2">
    <location>
        <position position="305"/>
    </location>
</feature>
<feature type="non-terminal residue" evidence="9">
    <location>
        <position position="1"/>
    </location>
</feature>
<feature type="non-terminal residue" evidence="9">
    <location>
        <position position="310"/>
    </location>
</feature>
<comment type="function">
    <text evidence="2">Together with KRT19, helps to link the contractile apparatus to dystrophin at the costameres of striated muscle.</text>
</comment>
<comment type="subunit">
    <text evidence="2 3 4">Heterotetramer of two type I and two type II keratins (By similarity). Forms a heterodimer with KRT18 (By similarity). Associates with KRT20 (By similarity). Interacts with PNN (By similarity). When associated with KRT19, interacts with DMD (By similarity). Interacts with APEX1 (By similarity). Interacts with GPER1 (By similarity). Interacts with EPPK1 (By similarity). Interacts with PKP1 and PKP2 (By similarity).</text>
</comment>
<comment type="subcellular location">
    <subcellularLocation>
        <location evidence="4">Cytoplasm</location>
    </subcellularLocation>
    <subcellularLocation>
        <location evidence="4">Nucleus</location>
        <location evidence="4">Nucleoplasm</location>
    </subcellularLocation>
    <subcellularLocation>
        <location evidence="4">Nucleus matrix</location>
    </subcellularLocation>
</comment>
<comment type="PTM">
    <text evidence="1">O-glycosylated. O-GlcNAcylation at multiple sites increases solubility, and decreases stability by inducing proteasomal degradation (By similarity).</text>
</comment>
<comment type="PTM">
    <text evidence="1">O-glycosylated (O-GlcNAcylated), in a cell cycle-dependent manner.</text>
</comment>
<comment type="miscellaneous">
    <text>There are two types of cytoskeletal and microfibrillar keratin: I (acidic; 40-55 kDa) and II (neutral to basic; 56-70 kDa).</text>
</comment>
<comment type="similarity">
    <text evidence="6">Belongs to the intermediate filament family.</text>
</comment>
<protein>
    <recommendedName>
        <fullName>Keratin, type II cytoskeletal 8</fullName>
    </recommendedName>
    <alternativeName>
        <fullName>Cytokeratin-8</fullName>
        <shortName>CK-8</shortName>
    </alternativeName>
    <alternativeName>
        <fullName>Keratin-8</fullName>
        <shortName>K8</shortName>
    </alternativeName>
    <alternativeName>
        <fullName>Type-II keratin Kb8</fullName>
    </alternativeName>
</protein>
<proteinExistence type="evidence at transcript level"/>
<sequence>QRTLKVSSSGPRSFSSRSFSSGPSSRISSSSYSRVGSNSSFRSGVGFGPNYGMGLGSSIGVGGITAVSVNQSLLNPLKLELDPSIQAVRTQEKEQIKTLNNKFASFIDKVRFLEQQNKILETKWSFLQQQKTSQSNLDGLFEKYITNLRRQLDSMGQEKLKLEVELGNMQGLVEDFKKKYEDEINKRTEMENEFVLIKKDVDEAYMNKVELESRLEGLTDEINFLRHLYEEEIKEMQSQISDTSVVVSMDNSRSLDLDGIIADVRAQYEEIANRSRAEAETMYQIKYEELQLLAGKHGDDLRHTKTEISE</sequence>
<gene>
    <name evidence="2" type="primary">KRT8</name>
</gene>
<dbReference type="EMBL" id="X70987">
    <property type="protein sequence ID" value="CAA50316.1"/>
    <property type="molecule type" value="mRNA"/>
</dbReference>
<dbReference type="PIR" id="S43865">
    <property type="entry name" value="S43865"/>
</dbReference>
<dbReference type="SMR" id="Q28810"/>
<dbReference type="GO" id="GO:0005737">
    <property type="term" value="C:cytoplasm"/>
    <property type="evidence" value="ECO:0000250"/>
    <property type="project" value="UniProtKB"/>
</dbReference>
<dbReference type="GO" id="GO:0045095">
    <property type="term" value="C:keratin filament"/>
    <property type="evidence" value="ECO:0007669"/>
    <property type="project" value="InterPro"/>
</dbReference>
<dbReference type="GO" id="GO:0016363">
    <property type="term" value="C:nuclear matrix"/>
    <property type="evidence" value="ECO:0007669"/>
    <property type="project" value="UniProtKB-SubCell"/>
</dbReference>
<dbReference type="GO" id="GO:0005654">
    <property type="term" value="C:nucleoplasm"/>
    <property type="evidence" value="ECO:0007669"/>
    <property type="project" value="UniProtKB-SubCell"/>
</dbReference>
<dbReference type="FunFam" id="1.20.5.1160:FF:000001">
    <property type="entry name" value="Keratin type II"/>
    <property type="match status" value="1"/>
</dbReference>
<dbReference type="FunFam" id="1.20.5.500:FF:000001">
    <property type="entry name" value="Type II keratin 23"/>
    <property type="match status" value="1"/>
</dbReference>
<dbReference type="Gene3D" id="1.20.5.500">
    <property type="entry name" value="Single helix bin"/>
    <property type="match status" value="1"/>
</dbReference>
<dbReference type="Gene3D" id="1.20.5.1160">
    <property type="entry name" value="Vasodilator-stimulated phosphoprotein"/>
    <property type="match status" value="1"/>
</dbReference>
<dbReference type="InterPro" id="IPR039008">
    <property type="entry name" value="IF_rod_dom"/>
</dbReference>
<dbReference type="InterPro" id="IPR032444">
    <property type="entry name" value="Keratin_2_head"/>
</dbReference>
<dbReference type="InterPro" id="IPR003054">
    <property type="entry name" value="Keratin_II"/>
</dbReference>
<dbReference type="PANTHER" id="PTHR45616">
    <property type="entry name" value="GATA-TYPE DOMAIN-CONTAINING PROTEIN"/>
    <property type="match status" value="1"/>
</dbReference>
<dbReference type="PANTHER" id="PTHR45616:SF26">
    <property type="entry name" value="KERATIN, TYPE II CYTOSKELETAL 8"/>
    <property type="match status" value="1"/>
</dbReference>
<dbReference type="Pfam" id="PF00038">
    <property type="entry name" value="Filament"/>
    <property type="match status" value="1"/>
</dbReference>
<dbReference type="Pfam" id="PF16208">
    <property type="entry name" value="Keratin_2_head"/>
    <property type="match status" value="1"/>
</dbReference>
<dbReference type="PRINTS" id="PR01276">
    <property type="entry name" value="TYPE2KERATIN"/>
</dbReference>
<dbReference type="SMART" id="SM01391">
    <property type="entry name" value="Filament"/>
    <property type="match status" value="1"/>
</dbReference>
<dbReference type="SUPFAM" id="SSF64593">
    <property type="entry name" value="Intermediate filament protein, coiled coil region"/>
    <property type="match status" value="2"/>
</dbReference>
<dbReference type="PROSITE" id="PS51842">
    <property type="entry name" value="IF_ROD_2"/>
    <property type="match status" value="1"/>
</dbReference>
<organism>
    <name type="scientific">Potorous tridactylus</name>
    <name type="common">Potoroo</name>
    <dbReference type="NCBI Taxonomy" id="9310"/>
    <lineage>
        <taxon>Eukaryota</taxon>
        <taxon>Metazoa</taxon>
        <taxon>Chordata</taxon>
        <taxon>Craniata</taxon>
        <taxon>Vertebrata</taxon>
        <taxon>Euteleostomi</taxon>
        <taxon>Mammalia</taxon>
        <taxon>Metatheria</taxon>
        <taxon>Diprotodontia</taxon>
        <taxon>Potoroidae</taxon>
        <taxon>Potorous</taxon>
    </lineage>
</organism>
<reference evidence="9" key="1">
    <citation type="journal article" date="1994" name="J. Mol. Biol.">
        <title>A monoclonal antibody epitope on keratin 8 identified using a phage peptide library.</title>
        <authorList>
            <person name="Boettger V."/>
            <person name="Lane E.B."/>
        </authorList>
    </citation>
    <scope>NUCLEOTIDE SEQUENCE [MRNA]</scope>
</reference>
<keyword id="KW-0007">Acetylation</keyword>
<keyword id="KW-0175">Coiled coil</keyword>
<keyword id="KW-0963">Cytoplasm</keyword>
<keyword id="KW-0325">Glycoprotein</keyword>
<keyword id="KW-0403">Intermediate filament</keyword>
<keyword id="KW-1017">Isopeptide bond</keyword>
<keyword id="KW-0416">Keratin</keyword>
<keyword id="KW-0488">Methylation</keyword>
<keyword id="KW-0539">Nucleus</keyword>
<keyword id="KW-0597">Phosphoprotein</keyword>
<keyword id="KW-0832">Ubl conjugation</keyword>
<name>K2C8_POTTR</name>